<organism>
    <name type="scientific">Pediococcus pentosaceus (strain ATCC 25745 / CCUG 21536 / LMG 10740 / 183-1w)</name>
    <dbReference type="NCBI Taxonomy" id="278197"/>
    <lineage>
        <taxon>Bacteria</taxon>
        <taxon>Bacillati</taxon>
        <taxon>Bacillota</taxon>
        <taxon>Bacilli</taxon>
        <taxon>Lactobacillales</taxon>
        <taxon>Lactobacillaceae</taxon>
        <taxon>Pediococcus</taxon>
    </lineage>
</organism>
<name>MNME_PEDPA</name>
<proteinExistence type="inferred from homology"/>
<keyword id="KW-0963">Cytoplasm</keyword>
<keyword id="KW-0342">GTP-binding</keyword>
<keyword id="KW-0378">Hydrolase</keyword>
<keyword id="KW-0460">Magnesium</keyword>
<keyword id="KW-0479">Metal-binding</keyword>
<keyword id="KW-0547">Nucleotide-binding</keyword>
<keyword id="KW-0630">Potassium</keyword>
<keyword id="KW-0819">tRNA processing</keyword>
<feature type="chain" id="PRO_0000345863" description="tRNA modification GTPase MnmE">
    <location>
        <begin position="1"/>
        <end position="464"/>
    </location>
</feature>
<feature type="domain" description="TrmE-type G">
    <location>
        <begin position="225"/>
        <end position="384"/>
    </location>
</feature>
<feature type="binding site" evidence="1">
    <location>
        <position position="27"/>
    </location>
    <ligand>
        <name>(6S)-5-formyl-5,6,7,8-tetrahydrofolate</name>
        <dbReference type="ChEBI" id="CHEBI:57457"/>
    </ligand>
</feature>
<feature type="binding site" evidence="1">
    <location>
        <position position="89"/>
    </location>
    <ligand>
        <name>(6S)-5-formyl-5,6,7,8-tetrahydrofolate</name>
        <dbReference type="ChEBI" id="CHEBI:57457"/>
    </ligand>
</feature>
<feature type="binding site" evidence="1">
    <location>
        <position position="128"/>
    </location>
    <ligand>
        <name>(6S)-5-formyl-5,6,7,8-tetrahydrofolate</name>
        <dbReference type="ChEBI" id="CHEBI:57457"/>
    </ligand>
</feature>
<feature type="binding site" evidence="1">
    <location>
        <begin position="235"/>
        <end position="240"/>
    </location>
    <ligand>
        <name>GTP</name>
        <dbReference type="ChEBI" id="CHEBI:37565"/>
    </ligand>
</feature>
<feature type="binding site" evidence="1">
    <location>
        <position position="235"/>
    </location>
    <ligand>
        <name>K(+)</name>
        <dbReference type="ChEBI" id="CHEBI:29103"/>
    </ligand>
</feature>
<feature type="binding site" evidence="1">
    <location>
        <position position="239"/>
    </location>
    <ligand>
        <name>Mg(2+)</name>
        <dbReference type="ChEBI" id="CHEBI:18420"/>
    </ligand>
</feature>
<feature type="binding site" evidence="1">
    <location>
        <begin position="254"/>
        <end position="260"/>
    </location>
    <ligand>
        <name>GTP</name>
        <dbReference type="ChEBI" id="CHEBI:37565"/>
    </ligand>
</feature>
<feature type="binding site" evidence="1">
    <location>
        <position position="254"/>
    </location>
    <ligand>
        <name>K(+)</name>
        <dbReference type="ChEBI" id="CHEBI:29103"/>
    </ligand>
</feature>
<feature type="binding site" evidence="1">
    <location>
        <position position="256"/>
    </location>
    <ligand>
        <name>K(+)</name>
        <dbReference type="ChEBI" id="CHEBI:29103"/>
    </ligand>
</feature>
<feature type="binding site" evidence="1">
    <location>
        <position position="259"/>
    </location>
    <ligand>
        <name>K(+)</name>
        <dbReference type="ChEBI" id="CHEBI:29103"/>
    </ligand>
</feature>
<feature type="binding site" evidence="1">
    <location>
        <position position="260"/>
    </location>
    <ligand>
        <name>Mg(2+)</name>
        <dbReference type="ChEBI" id="CHEBI:18420"/>
    </ligand>
</feature>
<feature type="binding site" evidence="1">
    <location>
        <begin position="279"/>
        <end position="282"/>
    </location>
    <ligand>
        <name>GTP</name>
        <dbReference type="ChEBI" id="CHEBI:37565"/>
    </ligand>
</feature>
<feature type="binding site" evidence="1">
    <location>
        <position position="464"/>
    </location>
    <ligand>
        <name>(6S)-5-formyl-5,6,7,8-tetrahydrofolate</name>
        <dbReference type="ChEBI" id="CHEBI:57457"/>
    </ligand>
</feature>
<reference key="1">
    <citation type="journal article" date="2006" name="Proc. Natl. Acad. Sci. U.S.A.">
        <title>Comparative genomics of the lactic acid bacteria.</title>
        <authorList>
            <person name="Makarova K.S."/>
            <person name="Slesarev A."/>
            <person name="Wolf Y.I."/>
            <person name="Sorokin A."/>
            <person name="Mirkin B."/>
            <person name="Koonin E.V."/>
            <person name="Pavlov A."/>
            <person name="Pavlova N."/>
            <person name="Karamychev V."/>
            <person name="Polouchine N."/>
            <person name="Shakhova V."/>
            <person name="Grigoriev I."/>
            <person name="Lou Y."/>
            <person name="Rohksar D."/>
            <person name="Lucas S."/>
            <person name="Huang K."/>
            <person name="Goodstein D.M."/>
            <person name="Hawkins T."/>
            <person name="Plengvidhya V."/>
            <person name="Welker D."/>
            <person name="Hughes J."/>
            <person name="Goh Y."/>
            <person name="Benson A."/>
            <person name="Baldwin K."/>
            <person name="Lee J.-H."/>
            <person name="Diaz-Muniz I."/>
            <person name="Dosti B."/>
            <person name="Smeianov V."/>
            <person name="Wechter W."/>
            <person name="Barabote R."/>
            <person name="Lorca G."/>
            <person name="Altermann E."/>
            <person name="Barrangou R."/>
            <person name="Ganesan B."/>
            <person name="Xie Y."/>
            <person name="Rawsthorne H."/>
            <person name="Tamir D."/>
            <person name="Parker C."/>
            <person name="Breidt F."/>
            <person name="Broadbent J.R."/>
            <person name="Hutkins R."/>
            <person name="O'Sullivan D."/>
            <person name="Steele J."/>
            <person name="Unlu G."/>
            <person name="Saier M.H. Jr."/>
            <person name="Klaenhammer T."/>
            <person name="Richardson P."/>
            <person name="Kozyavkin S."/>
            <person name="Weimer B.C."/>
            <person name="Mills D.A."/>
        </authorList>
    </citation>
    <scope>NUCLEOTIDE SEQUENCE [LARGE SCALE GENOMIC DNA]</scope>
    <source>
        <strain>ATCC 25745 / CCUG 21536 / LMG 10740 / 183-1w</strain>
    </source>
</reference>
<accession>Q03D59</accession>
<comment type="function">
    <text evidence="1">Exhibits a very high intrinsic GTPase hydrolysis rate. Involved in the addition of a carboxymethylaminomethyl (cmnm) group at the wobble position (U34) of certain tRNAs, forming tRNA-cmnm(5)s(2)U34.</text>
</comment>
<comment type="cofactor">
    <cofactor evidence="1">
        <name>K(+)</name>
        <dbReference type="ChEBI" id="CHEBI:29103"/>
    </cofactor>
    <text evidence="1">Binds 1 potassium ion per subunit.</text>
</comment>
<comment type="subunit">
    <text evidence="1">Homodimer. Heterotetramer of two MnmE and two MnmG subunits.</text>
</comment>
<comment type="subcellular location">
    <subcellularLocation>
        <location evidence="1">Cytoplasm</location>
    </subcellularLocation>
</comment>
<comment type="similarity">
    <text evidence="1">Belongs to the TRAFAC class TrmE-Era-EngA-EngB-Septin-like GTPase superfamily. TrmE GTPase family.</text>
</comment>
<dbReference type="EC" id="3.6.-.-" evidence="1"/>
<dbReference type="EMBL" id="CP000422">
    <property type="protein sequence ID" value="ABJ68863.1"/>
    <property type="molecule type" value="Genomic_DNA"/>
</dbReference>
<dbReference type="RefSeq" id="WP_011673925.1">
    <property type="nucleotide sequence ID" value="NC_008525.1"/>
</dbReference>
<dbReference type="SMR" id="Q03D59"/>
<dbReference type="STRING" id="278197.PEPE_1844"/>
<dbReference type="GeneID" id="33062185"/>
<dbReference type="KEGG" id="ppe:PEPE_1844"/>
<dbReference type="eggNOG" id="COG0486">
    <property type="taxonomic scope" value="Bacteria"/>
</dbReference>
<dbReference type="HOGENOM" id="CLU_019624_4_1_9"/>
<dbReference type="OrthoDB" id="9805918at2"/>
<dbReference type="Proteomes" id="UP000000773">
    <property type="component" value="Chromosome"/>
</dbReference>
<dbReference type="GO" id="GO:0005829">
    <property type="term" value="C:cytosol"/>
    <property type="evidence" value="ECO:0007669"/>
    <property type="project" value="TreeGrafter"/>
</dbReference>
<dbReference type="GO" id="GO:0005525">
    <property type="term" value="F:GTP binding"/>
    <property type="evidence" value="ECO:0007669"/>
    <property type="project" value="UniProtKB-UniRule"/>
</dbReference>
<dbReference type="GO" id="GO:0003924">
    <property type="term" value="F:GTPase activity"/>
    <property type="evidence" value="ECO:0007669"/>
    <property type="project" value="UniProtKB-UniRule"/>
</dbReference>
<dbReference type="GO" id="GO:0046872">
    <property type="term" value="F:metal ion binding"/>
    <property type="evidence" value="ECO:0007669"/>
    <property type="project" value="UniProtKB-KW"/>
</dbReference>
<dbReference type="GO" id="GO:0030488">
    <property type="term" value="P:tRNA methylation"/>
    <property type="evidence" value="ECO:0007669"/>
    <property type="project" value="TreeGrafter"/>
</dbReference>
<dbReference type="GO" id="GO:0002098">
    <property type="term" value="P:tRNA wobble uridine modification"/>
    <property type="evidence" value="ECO:0007669"/>
    <property type="project" value="TreeGrafter"/>
</dbReference>
<dbReference type="CDD" id="cd04164">
    <property type="entry name" value="trmE"/>
    <property type="match status" value="1"/>
</dbReference>
<dbReference type="CDD" id="cd14858">
    <property type="entry name" value="TrmE_N"/>
    <property type="match status" value="1"/>
</dbReference>
<dbReference type="FunFam" id="3.30.1360.120:FF:000003">
    <property type="entry name" value="tRNA modification GTPase MnmE"/>
    <property type="match status" value="1"/>
</dbReference>
<dbReference type="FunFam" id="3.40.50.300:FF:000494">
    <property type="entry name" value="tRNA modification GTPase MnmE"/>
    <property type="match status" value="1"/>
</dbReference>
<dbReference type="Gene3D" id="3.40.50.300">
    <property type="entry name" value="P-loop containing nucleotide triphosphate hydrolases"/>
    <property type="match status" value="1"/>
</dbReference>
<dbReference type="Gene3D" id="3.30.1360.120">
    <property type="entry name" value="Probable tRNA modification gtpase trme, domain 1"/>
    <property type="match status" value="1"/>
</dbReference>
<dbReference type="Gene3D" id="1.20.120.430">
    <property type="entry name" value="tRNA modification GTPase MnmE domain 2"/>
    <property type="match status" value="1"/>
</dbReference>
<dbReference type="HAMAP" id="MF_00379">
    <property type="entry name" value="GTPase_MnmE"/>
    <property type="match status" value="1"/>
</dbReference>
<dbReference type="InterPro" id="IPR031168">
    <property type="entry name" value="G_TrmE"/>
</dbReference>
<dbReference type="InterPro" id="IPR006073">
    <property type="entry name" value="GTP-bd"/>
</dbReference>
<dbReference type="InterPro" id="IPR018948">
    <property type="entry name" value="GTP-bd_TrmE_N"/>
</dbReference>
<dbReference type="InterPro" id="IPR004520">
    <property type="entry name" value="GTPase_MnmE"/>
</dbReference>
<dbReference type="InterPro" id="IPR027368">
    <property type="entry name" value="MnmE_dom2"/>
</dbReference>
<dbReference type="InterPro" id="IPR025867">
    <property type="entry name" value="MnmE_helical"/>
</dbReference>
<dbReference type="InterPro" id="IPR027417">
    <property type="entry name" value="P-loop_NTPase"/>
</dbReference>
<dbReference type="InterPro" id="IPR005225">
    <property type="entry name" value="Small_GTP-bd"/>
</dbReference>
<dbReference type="InterPro" id="IPR027266">
    <property type="entry name" value="TrmE/GcvT_dom1"/>
</dbReference>
<dbReference type="NCBIfam" id="TIGR00450">
    <property type="entry name" value="mnmE_trmE_thdF"/>
    <property type="match status" value="1"/>
</dbReference>
<dbReference type="NCBIfam" id="NF003661">
    <property type="entry name" value="PRK05291.1-3"/>
    <property type="match status" value="1"/>
</dbReference>
<dbReference type="NCBIfam" id="TIGR00231">
    <property type="entry name" value="small_GTP"/>
    <property type="match status" value="1"/>
</dbReference>
<dbReference type="PANTHER" id="PTHR42714">
    <property type="entry name" value="TRNA MODIFICATION GTPASE GTPBP3"/>
    <property type="match status" value="1"/>
</dbReference>
<dbReference type="PANTHER" id="PTHR42714:SF2">
    <property type="entry name" value="TRNA MODIFICATION GTPASE GTPBP3, MITOCHONDRIAL"/>
    <property type="match status" value="1"/>
</dbReference>
<dbReference type="Pfam" id="PF01926">
    <property type="entry name" value="MMR_HSR1"/>
    <property type="match status" value="1"/>
</dbReference>
<dbReference type="Pfam" id="PF12631">
    <property type="entry name" value="MnmE_helical"/>
    <property type="match status" value="1"/>
</dbReference>
<dbReference type="Pfam" id="PF10396">
    <property type="entry name" value="TrmE_N"/>
    <property type="match status" value="1"/>
</dbReference>
<dbReference type="SUPFAM" id="SSF52540">
    <property type="entry name" value="P-loop containing nucleoside triphosphate hydrolases"/>
    <property type="match status" value="1"/>
</dbReference>
<dbReference type="SUPFAM" id="SSF116878">
    <property type="entry name" value="TrmE connector domain"/>
    <property type="match status" value="1"/>
</dbReference>
<dbReference type="PROSITE" id="PS51709">
    <property type="entry name" value="G_TRME"/>
    <property type="match status" value="1"/>
</dbReference>
<evidence type="ECO:0000255" key="1">
    <source>
        <dbReference type="HAMAP-Rule" id="MF_00379"/>
    </source>
</evidence>
<protein>
    <recommendedName>
        <fullName evidence="1">tRNA modification GTPase MnmE</fullName>
        <ecNumber evidence="1">3.6.-.-</ecNumber>
    </recommendedName>
</protein>
<gene>
    <name evidence="1" type="primary">mnmE</name>
    <name evidence="1" type="synonym">trmE</name>
    <name type="ordered locus">PEPE_1844</name>
</gene>
<sequence length="464" mass="51159">MQTVSTEFDTIAAISTPPGEGGISIIRISGVDALKTASQIYRGKDLNKVNSHTINYGHIIDPENGNEVDEVMVSVMRAPHTYTKEDIVEINCHGGIVATNRILQIILGLDARLAKPGEFTERAFLNGRIDLSQAEAVMDLIRAKTDQSMKVALDQLDGNLSHLITNLRQNILDVLAQVEVNIDYPEYDDVETMTARLLKEKAIEVKAKIQQLLSTAKQGKVLRDGLATAIIGHPNVGKSSILNHLLHEDKAIVTDVAGTTRDVIEEYVNVQGVPLKLVDTAGIHETEDKVEKIGVDRSRKALSQADLVILVLDSSVPLRDEDRELLRETNHMQRIVVLNKSDLEVKINLNELQEYVDDKEIIKSSAVSPLGTKDLEDRIAAMFFAGSIENTSNNIMVTNARHIGLLKQADTALDAVLEGIETGMPVDLVQIDMTRTWDLLGEITGDSYQDELLDQLFSQFCLGK</sequence>